<name>MIAA_THEPX</name>
<sequence length="315" mass="36759">MAIQIVLIVGPTASGKSKLAVDVAKEFNGEIISADSMQVYKYMDVGTAKITKEEMQGIPHYLIDIVEPDQEFSVAEYEKRAKEIIKDIYKRGKLPIIVGGTGLYINSIIYIMHFSDFEGSKEFREKMKELANTYGSQYLYEKLKSVDPEAAKKIHPNDIRRIIRALEVYEFTGKPISYYQKMSGMRLNPEYQPIMIGLNFRDRQILYDRINQRVDEMIKNNLVEEVVNLLKIGYNKDSTAMQALGYKEIVEYLKGEISLEEAIEKIKKGTRRYAKRQITWFKGYDFIKWFFVDDYKNYEELKKNIIKYLAGKLNF</sequence>
<reference key="1">
    <citation type="submission" date="2008-01" db="EMBL/GenBank/DDBJ databases">
        <title>Complete sequence of Thermoanaerobacter sp. X514.</title>
        <authorList>
            <consortium name="US DOE Joint Genome Institute"/>
            <person name="Copeland A."/>
            <person name="Lucas S."/>
            <person name="Lapidus A."/>
            <person name="Barry K."/>
            <person name="Glavina del Rio T."/>
            <person name="Dalin E."/>
            <person name="Tice H."/>
            <person name="Pitluck S."/>
            <person name="Bruce D."/>
            <person name="Goodwin L."/>
            <person name="Saunders E."/>
            <person name="Brettin T."/>
            <person name="Detter J.C."/>
            <person name="Han C."/>
            <person name="Schmutz J."/>
            <person name="Larimer F."/>
            <person name="Land M."/>
            <person name="Hauser L."/>
            <person name="Kyrpides N."/>
            <person name="Kim E."/>
            <person name="Hemme C."/>
            <person name="Fields M.W."/>
            <person name="He Z."/>
            <person name="Zhou J."/>
            <person name="Richardson P."/>
        </authorList>
    </citation>
    <scope>NUCLEOTIDE SEQUENCE [LARGE SCALE GENOMIC DNA]</scope>
    <source>
        <strain>X514</strain>
    </source>
</reference>
<evidence type="ECO:0000255" key="1">
    <source>
        <dbReference type="HAMAP-Rule" id="MF_00185"/>
    </source>
</evidence>
<organism>
    <name type="scientific">Thermoanaerobacter sp. (strain X514)</name>
    <dbReference type="NCBI Taxonomy" id="399726"/>
    <lineage>
        <taxon>Bacteria</taxon>
        <taxon>Bacillati</taxon>
        <taxon>Bacillota</taxon>
        <taxon>Clostridia</taxon>
        <taxon>Thermoanaerobacterales</taxon>
        <taxon>Thermoanaerobacteraceae</taxon>
        <taxon>Thermoanaerobacter</taxon>
    </lineage>
</organism>
<protein>
    <recommendedName>
        <fullName evidence="1">tRNA dimethylallyltransferase</fullName>
        <ecNumber evidence="1">2.5.1.75</ecNumber>
    </recommendedName>
    <alternativeName>
        <fullName evidence="1">Dimethylallyl diphosphate:tRNA dimethylallyltransferase</fullName>
        <shortName evidence="1">DMAPP:tRNA dimethylallyltransferase</shortName>
        <shortName evidence="1">DMATase</shortName>
    </alternativeName>
    <alternativeName>
        <fullName evidence="1">Isopentenyl-diphosphate:tRNA isopentenyltransferase</fullName>
        <shortName evidence="1">IPP transferase</shortName>
        <shortName evidence="1">IPPT</shortName>
        <shortName evidence="1">IPTase</shortName>
    </alternativeName>
</protein>
<keyword id="KW-0067">ATP-binding</keyword>
<keyword id="KW-0460">Magnesium</keyword>
<keyword id="KW-0547">Nucleotide-binding</keyword>
<keyword id="KW-0808">Transferase</keyword>
<keyword id="KW-0819">tRNA processing</keyword>
<feature type="chain" id="PRO_1000098696" description="tRNA dimethylallyltransferase">
    <location>
        <begin position="1"/>
        <end position="315"/>
    </location>
</feature>
<feature type="region of interest" description="Interaction with substrate tRNA" evidence="1">
    <location>
        <begin position="35"/>
        <end position="38"/>
    </location>
</feature>
<feature type="binding site" evidence="1">
    <location>
        <begin position="10"/>
        <end position="17"/>
    </location>
    <ligand>
        <name>ATP</name>
        <dbReference type="ChEBI" id="CHEBI:30616"/>
    </ligand>
</feature>
<feature type="binding site" evidence="1">
    <location>
        <begin position="12"/>
        <end position="17"/>
    </location>
    <ligand>
        <name>substrate</name>
    </ligand>
</feature>
<feature type="site" description="Interaction with substrate tRNA" evidence="1">
    <location>
        <position position="101"/>
    </location>
</feature>
<feature type="site" description="Interaction with substrate tRNA" evidence="1">
    <location>
        <position position="124"/>
    </location>
</feature>
<gene>
    <name evidence="1" type="primary">miaA</name>
    <name type="ordered locus">Teth514_1613</name>
</gene>
<accession>B0K1A4</accession>
<proteinExistence type="inferred from homology"/>
<comment type="function">
    <text evidence="1">Catalyzes the transfer of a dimethylallyl group onto the adenine at position 37 in tRNAs that read codons beginning with uridine, leading to the formation of N6-(dimethylallyl)adenosine (i(6)A).</text>
</comment>
<comment type="catalytic activity">
    <reaction evidence="1">
        <text>adenosine(37) in tRNA + dimethylallyl diphosphate = N(6)-dimethylallyladenosine(37) in tRNA + diphosphate</text>
        <dbReference type="Rhea" id="RHEA:26482"/>
        <dbReference type="Rhea" id="RHEA-COMP:10162"/>
        <dbReference type="Rhea" id="RHEA-COMP:10375"/>
        <dbReference type="ChEBI" id="CHEBI:33019"/>
        <dbReference type="ChEBI" id="CHEBI:57623"/>
        <dbReference type="ChEBI" id="CHEBI:74411"/>
        <dbReference type="ChEBI" id="CHEBI:74415"/>
        <dbReference type="EC" id="2.5.1.75"/>
    </reaction>
</comment>
<comment type="cofactor">
    <cofactor evidence="1">
        <name>Mg(2+)</name>
        <dbReference type="ChEBI" id="CHEBI:18420"/>
    </cofactor>
</comment>
<comment type="subunit">
    <text evidence="1">Monomer.</text>
</comment>
<comment type="similarity">
    <text evidence="1">Belongs to the IPP transferase family.</text>
</comment>
<dbReference type="EC" id="2.5.1.75" evidence="1"/>
<dbReference type="EMBL" id="CP000923">
    <property type="protein sequence ID" value="ABY92899.1"/>
    <property type="molecule type" value="Genomic_DNA"/>
</dbReference>
<dbReference type="RefSeq" id="WP_003866788.1">
    <property type="nucleotide sequence ID" value="NC_010320.1"/>
</dbReference>
<dbReference type="SMR" id="B0K1A4"/>
<dbReference type="KEGG" id="tex:Teth514_1613"/>
<dbReference type="HOGENOM" id="CLU_032616_0_1_9"/>
<dbReference type="Proteomes" id="UP000002155">
    <property type="component" value="Chromosome"/>
</dbReference>
<dbReference type="GO" id="GO:0005524">
    <property type="term" value="F:ATP binding"/>
    <property type="evidence" value="ECO:0007669"/>
    <property type="project" value="UniProtKB-UniRule"/>
</dbReference>
<dbReference type="GO" id="GO:0052381">
    <property type="term" value="F:tRNA dimethylallyltransferase activity"/>
    <property type="evidence" value="ECO:0007669"/>
    <property type="project" value="UniProtKB-UniRule"/>
</dbReference>
<dbReference type="GO" id="GO:0006400">
    <property type="term" value="P:tRNA modification"/>
    <property type="evidence" value="ECO:0007669"/>
    <property type="project" value="TreeGrafter"/>
</dbReference>
<dbReference type="FunFam" id="1.10.20.140:FF:000001">
    <property type="entry name" value="tRNA dimethylallyltransferase"/>
    <property type="match status" value="1"/>
</dbReference>
<dbReference type="Gene3D" id="1.10.20.140">
    <property type="match status" value="1"/>
</dbReference>
<dbReference type="Gene3D" id="3.40.50.300">
    <property type="entry name" value="P-loop containing nucleotide triphosphate hydrolases"/>
    <property type="match status" value="1"/>
</dbReference>
<dbReference type="HAMAP" id="MF_00185">
    <property type="entry name" value="IPP_trans"/>
    <property type="match status" value="1"/>
</dbReference>
<dbReference type="InterPro" id="IPR039657">
    <property type="entry name" value="Dimethylallyltransferase"/>
</dbReference>
<dbReference type="InterPro" id="IPR018022">
    <property type="entry name" value="IPT"/>
</dbReference>
<dbReference type="InterPro" id="IPR027417">
    <property type="entry name" value="P-loop_NTPase"/>
</dbReference>
<dbReference type="NCBIfam" id="TIGR00174">
    <property type="entry name" value="miaA"/>
    <property type="match status" value="1"/>
</dbReference>
<dbReference type="PANTHER" id="PTHR11088">
    <property type="entry name" value="TRNA DIMETHYLALLYLTRANSFERASE"/>
    <property type="match status" value="1"/>
</dbReference>
<dbReference type="PANTHER" id="PTHR11088:SF60">
    <property type="entry name" value="TRNA DIMETHYLALLYLTRANSFERASE"/>
    <property type="match status" value="1"/>
</dbReference>
<dbReference type="Pfam" id="PF01715">
    <property type="entry name" value="IPPT"/>
    <property type="match status" value="1"/>
</dbReference>
<dbReference type="SUPFAM" id="SSF52540">
    <property type="entry name" value="P-loop containing nucleoside triphosphate hydrolases"/>
    <property type="match status" value="2"/>
</dbReference>